<protein>
    <recommendedName>
        <fullName evidence="1">ATP synthase subunit c, chloroplastic</fullName>
    </recommendedName>
    <alternativeName>
        <fullName evidence="1">ATP synthase F(0) sector subunit c</fullName>
    </alternativeName>
    <alternativeName>
        <fullName evidence="1">ATPase subunit III</fullName>
    </alternativeName>
    <alternativeName>
        <fullName evidence="1">F-type ATPase subunit c</fullName>
        <shortName evidence="1">F-ATPase subunit c</shortName>
    </alternativeName>
    <alternativeName>
        <fullName evidence="1">Lipid-binding protein</fullName>
    </alternativeName>
</protein>
<name>ATPH_CALFG</name>
<organism>
    <name type="scientific">Calycanthus floridus var. glaucus</name>
    <name type="common">Eastern sweetshrub</name>
    <name type="synonym">Calycanthus fertilis var. ferax</name>
    <dbReference type="NCBI Taxonomy" id="212734"/>
    <lineage>
        <taxon>Eukaryota</taxon>
        <taxon>Viridiplantae</taxon>
        <taxon>Streptophyta</taxon>
        <taxon>Embryophyta</taxon>
        <taxon>Tracheophyta</taxon>
        <taxon>Spermatophyta</taxon>
        <taxon>Magnoliopsida</taxon>
        <taxon>Magnoliidae</taxon>
        <taxon>Laurales</taxon>
        <taxon>Calycanthaceae</taxon>
        <taxon>Calycanthus</taxon>
    </lineage>
</organism>
<keyword id="KW-0066">ATP synthesis</keyword>
<keyword id="KW-0138">CF(0)</keyword>
<keyword id="KW-0150">Chloroplast</keyword>
<keyword id="KW-0375">Hydrogen ion transport</keyword>
<keyword id="KW-0406">Ion transport</keyword>
<keyword id="KW-0446">Lipid-binding</keyword>
<keyword id="KW-0472">Membrane</keyword>
<keyword id="KW-0934">Plastid</keyword>
<keyword id="KW-0793">Thylakoid</keyword>
<keyword id="KW-0812">Transmembrane</keyword>
<keyword id="KW-1133">Transmembrane helix</keyword>
<keyword id="KW-0813">Transport</keyword>
<sequence>MNPLISAASVIAAGLAVGLASIGPGVGQGTAAGQAVEGIARQPEAEGKIRGTLLLSLAFMEALTIYGLVVALALLFANPFV</sequence>
<geneLocation type="chloroplast"/>
<evidence type="ECO:0000255" key="1">
    <source>
        <dbReference type="HAMAP-Rule" id="MF_01396"/>
    </source>
</evidence>
<reference key="1">
    <citation type="journal article" date="2003" name="Plant Syst. Evol.">
        <title>The chloroplast genome of the 'basal' angiosperm Calycanthus fertilis -- structural and phylogenetic analyses.</title>
        <authorList>
            <person name="Goremykin V.V."/>
            <person name="Hirsch-Ernst K.I."/>
            <person name="Woelfl S."/>
            <person name="Hellwig F.H."/>
        </authorList>
    </citation>
    <scope>NUCLEOTIDE SEQUENCE [LARGE SCALE GENOMIC DNA]</scope>
</reference>
<gene>
    <name evidence="1" type="primary">atpH</name>
</gene>
<proteinExistence type="inferred from homology"/>
<accession>Q7HKY1</accession>
<comment type="function">
    <text evidence="1">F(1)F(0) ATP synthase produces ATP from ADP in the presence of a proton or sodium gradient. F-type ATPases consist of two structural domains, F(1) containing the extramembraneous catalytic core and F(0) containing the membrane proton channel, linked together by a central stalk and a peripheral stalk. During catalysis, ATP synthesis in the catalytic domain of F(1) is coupled via a rotary mechanism of the central stalk subunits to proton translocation.</text>
</comment>
<comment type="function">
    <text evidence="1">Key component of the F(0) channel; it plays a direct role in translocation across the membrane. A homomeric c-ring of between 10-14 subunits forms the central stalk rotor element with the F(1) delta and epsilon subunits.</text>
</comment>
<comment type="subunit">
    <text evidence="1">F-type ATPases have 2 components, F(1) - the catalytic core - and F(0) - the membrane proton channel. F(1) has five subunits: alpha(3), beta(3), gamma(1), delta(1), epsilon(1). F(0) has four main subunits: a(1), b(1), b'(1) and c(10-14). The alpha and beta chains form an alternating ring which encloses part of the gamma chain. F(1) is attached to F(0) by a central stalk formed by the gamma and epsilon chains, while a peripheral stalk is formed by the delta, b and b' chains.</text>
</comment>
<comment type="subcellular location">
    <subcellularLocation>
        <location evidence="1">Plastid</location>
        <location evidence="1">Chloroplast thylakoid membrane</location>
        <topology evidence="1">Multi-pass membrane protein</topology>
    </subcellularLocation>
</comment>
<comment type="miscellaneous">
    <text>In plastids the F-type ATPase is also known as CF(1)CF(0).</text>
</comment>
<comment type="similarity">
    <text evidence="1">Belongs to the ATPase C chain family.</text>
</comment>
<dbReference type="EMBL" id="AJ428413">
    <property type="protein sequence ID" value="CAD28708.1"/>
    <property type="molecule type" value="Genomic_DNA"/>
</dbReference>
<dbReference type="RefSeq" id="NP_862741.1">
    <property type="nucleotide sequence ID" value="NC_004993.1"/>
</dbReference>
<dbReference type="SMR" id="Q7HKY1"/>
<dbReference type="GeneID" id="2597978"/>
<dbReference type="GO" id="GO:0009535">
    <property type="term" value="C:chloroplast thylakoid membrane"/>
    <property type="evidence" value="ECO:0007669"/>
    <property type="project" value="UniProtKB-SubCell"/>
</dbReference>
<dbReference type="GO" id="GO:0045259">
    <property type="term" value="C:proton-transporting ATP synthase complex"/>
    <property type="evidence" value="ECO:0007669"/>
    <property type="project" value="UniProtKB-KW"/>
</dbReference>
<dbReference type="GO" id="GO:0033177">
    <property type="term" value="C:proton-transporting two-sector ATPase complex, proton-transporting domain"/>
    <property type="evidence" value="ECO:0007669"/>
    <property type="project" value="InterPro"/>
</dbReference>
<dbReference type="GO" id="GO:0008289">
    <property type="term" value="F:lipid binding"/>
    <property type="evidence" value="ECO:0007669"/>
    <property type="project" value="UniProtKB-KW"/>
</dbReference>
<dbReference type="GO" id="GO:0046933">
    <property type="term" value="F:proton-transporting ATP synthase activity, rotational mechanism"/>
    <property type="evidence" value="ECO:0007669"/>
    <property type="project" value="UniProtKB-UniRule"/>
</dbReference>
<dbReference type="CDD" id="cd18183">
    <property type="entry name" value="ATP-synt_Fo_c_ATPH"/>
    <property type="match status" value="1"/>
</dbReference>
<dbReference type="FunFam" id="1.20.20.10:FF:000001">
    <property type="entry name" value="ATP synthase subunit c, chloroplastic"/>
    <property type="match status" value="1"/>
</dbReference>
<dbReference type="Gene3D" id="1.20.20.10">
    <property type="entry name" value="F1F0 ATP synthase subunit C"/>
    <property type="match status" value="1"/>
</dbReference>
<dbReference type="HAMAP" id="MF_01396">
    <property type="entry name" value="ATP_synth_c_bact"/>
    <property type="match status" value="1"/>
</dbReference>
<dbReference type="InterPro" id="IPR005953">
    <property type="entry name" value="ATP_synth_csu_bac/chlpt"/>
</dbReference>
<dbReference type="InterPro" id="IPR000454">
    <property type="entry name" value="ATP_synth_F0_csu"/>
</dbReference>
<dbReference type="InterPro" id="IPR020537">
    <property type="entry name" value="ATP_synth_F0_csu_DDCD_BS"/>
</dbReference>
<dbReference type="InterPro" id="IPR038662">
    <property type="entry name" value="ATP_synth_F0_csu_sf"/>
</dbReference>
<dbReference type="InterPro" id="IPR002379">
    <property type="entry name" value="ATPase_proteolipid_c-like_dom"/>
</dbReference>
<dbReference type="InterPro" id="IPR035921">
    <property type="entry name" value="F/V-ATP_Csub_sf"/>
</dbReference>
<dbReference type="NCBIfam" id="TIGR01260">
    <property type="entry name" value="ATP_synt_c"/>
    <property type="match status" value="1"/>
</dbReference>
<dbReference type="NCBIfam" id="NF005608">
    <property type="entry name" value="PRK07354.1"/>
    <property type="match status" value="1"/>
</dbReference>
<dbReference type="PANTHER" id="PTHR10031">
    <property type="entry name" value="ATP SYNTHASE LIPID-BINDING PROTEIN, MITOCHONDRIAL"/>
    <property type="match status" value="1"/>
</dbReference>
<dbReference type="PANTHER" id="PTHR10031:SF0">
    <property type="entry name" value="ATPASE PROTEIN 9"/>
    <property type="match status" value="1"/>
</dbReference>
<dbReference type="Pfam" id="PF00137">
    <property type="entry name" value="ATP-synt_C"/>
    <property type="match status" value="1"/>
</dbReference>
<dbReference type="PRINTS" id="PR00124">
    <property type="entry name" value="ATPASEC"/>
</dbReference>
<dbReference type="SUPFAM" id="SSF81333">
    <property type="entry name" value="F1F0 ATP synthase subunit C"/>
    <property type="match status" value="1"/>
</dbReference>
<dbReference type="PROSITE" id="PS00605">
    <property type="entry name" value="ATPASE_C"/>
    <property type="match status" value="1"/>
</dbReference>
<feature type="chain" id="PRO_0000362892" description="ATP synthase subunit c, chloroplastic">
    <location>
        <begin position="1"/>
        <end position="81"/>
    </location>
</feature>
<feature type="transmembrane region" description="Helical" evidence="1">
    <location>
        <begin position="3"/>
        <end position="23"/>
    </location>
</feature>
<feature type="transmembrane region" description="Helical" evidence="1">
    <location>
        <begin position="57"/>
        <end position="77"/>
    </location>
</feature>
<feature type="site" description="Reversibly protonated during proton transport" evidence="1">
    <location>
        <position position="61"/>
    </location>
</feature>